<gene>
    <name evidence="1" type="primary">pdxS</name>
    <name type="ordered locus">PAE2819</name>
</gene>
<sequence length="336" mass="36884">MSVVGSFEQLERLRDLFYKLLDLRDTLRERGVAWPKPLSEEAALGTVRVKVGFPAMLKRGVIMDVTNVEQAQIAEDAGAVGVMVLDKLPYDVRRAGGVARMADLKVIEEVMAHVTIPVSAKVRIGHYYEAFLLEQVGVDLIDESEVLTPVDEQHHINKWMFTVPFVNGARELCEALRRISEGASMIRSKGEAGTGNVAEAVKHFKSIYGAIKSLAAGDEERVRDFARQCQVPFELVALTAKLQRLPVITFAAGGIATPADAALMMWLGADGVFVGSGIFKSQDPRERAEAIVLATAHWDDPETVVEAQKMVSERGAMMGIDIRTLKPEELLQTRGV</sequence>
<feature type="chain" id="PRO_0000109443" description="Pyridoxal 5'-phosphate synthase subunit PdxS">
    <location>
        <begin position="1"/>
        <end position="336"/>
    </location>
</feature>
<feature type="active site" description="Schiff-base intermediate with D-ribose 5-phosphate" evidence="1">
    <location>
        <position position="121"/>
    </location>
</feature>
<feature type="binding site" evidence="1">
    <location>
        <position position="64"/>
    </location>
    <ligand>
        <name>D-ribose 5-phosphate</name>
        <dbReference type="ChEBI" id="CHEBI:78346"/>
    </ligand>
</feature>
<feature type="binding site" evidence="1">
    <location>
        <position position="193"/>
    </location>
    <ligand>
        <name>D-ribose 5-phosphate</name>
        <dbReference type="ChEBI" id="CHEBI:78346"/>
    </ligand>
</feature>
<feature type="binding site" evidence="1">
    <location>
        <position position="205"/>
    </location>
    <ligand>
        <name>D-glyceraldehyde 3-phosphate</name>
        <dbReference type="ChEBI" id="CHEBI:59776"/>
    </ligand>
</feature>
<feature type="binding site" evidence="1">
    <location>
        <position position="254"/>
    </location>
    <ligand>
        <name>D-ribose 5-phosphate</name>
        <dbReference type="ChEBI" id="CHEBI:78346"/>
    </ligand>
</feature>
<feature type="binding site" evidence="1">
    <location>
        <begin position="275"/>
        <end position="276"/>
    </location>
    <ligand>
        <name>D-ribose 5-phosphate</name>
        <dbReference type="ChEBI" id="CHEBI:78346"/>
    </ligand>
</feature>
<evidence type="ECO:0000255" key="1">
    <source>
        <dbReference type="HAMAP-Rule" id="MF_01824"/>
    </source>
</evidence>
<name>PDXS_PYRAE</name>
<comment type="function">
    <text evidence="1">Catalyzes the formation of pyridoxal 5'-phosphate from ribose 5-phosphate (RBP), glyceraldehyde 3-phosphate (G3P) and ammonia. The ammonia is provided by the PdxT subunit. Can also use ribulose 5-phosphate and dihydroxyacetone phosphate as substrates, resulting from enzyme-catalyzed isomerization of RBP and G3P, respectively.</text>
</comment>
<comment type="catalytic activity">
    <reaction evidence="1">
        <text>aldehydo-D-ribose 5-phosphate + D-glyceraldehyde 3-phosphate + L-glutamine = pyridoxal 5'-phosphate + L-glutamate + phosphate + 3 H2O + H(+)</text>
        <dbReference type="Rhea" id="RHEA:31507"/>
        <dbReference type="ChEBI" id="CHEBI:15377"/>
        <dbReference type="ChEBI" id="CHEBI:15378"/>
        <dbReference type="ChEBI" id="CHEBI:29985"/>
        <dbReference type="ChEBI" id="CHEBI:43474"/>
        <dbReference type="ChEBI" id="CHEBI:58273"/>
        <dbReference type="ChEBI" id="CHEBI:58359"/>
        <dbReference type="ChEBI" id="CHEBI:59776"/>
        <dbReference type="ChEBI" id="CHEBI:597326"/>
        <dbReference type="EC" id="4.3.3.6"/>
    </reaction>
</comment>
<comment type="pathway">
    <text evidence="1">Cofactor biosynthesis; pyridoxal 5'-phosphate biosynthesis.</text>
</comment>
<comment type="subunit">
    <text evidence="1">In the presence of PdxT, forms a dodecamer of heterodimers.</text>
</comment>
<comment type="similarity">
    <text evidence="1">Belongs to the PdxS/SNZ family.</text>
</comment>
<reference key="1">
    <citation type="journal article" date="2002" name="Proc. Natl. Acad. Sci. U.S.A.">
        <title>Genome sequence of the hyperthermophilic crenarchaeon Pyrobaculum aerophilum.</title>
        <authorList>
            <person name="Fitz-Gibbon S.T."/>
            <person name="Ladner H."/>
            <person name="Kim U.-J."/>
            <person name="Stetter K.O."/>
            <person name="Simon M.I."/>
            <person name="Miller J.H."/>
        </authorList>
    </citation>
    <scope>NUCLEOTIDE SEQUENCE [LARGE SCALE GENOMIC DNA]</scope>
    <source>
        <strain>ATCC 51768 / DSM 7523 / JCM 9630 / CIP 104966 / NBRC 100827 / IM2</strain>
    </source>
</reference>
<accession>Q8ZUF0</accession>
<protein>
    <recommendedName>
        <fullName evidence="1">Pyridoxal 5'-phosphate synthase subunit PdxS</fullName>
        <shortName evidence="1">PLP synthase subunit PdxS</shortName>
        <ecNumber evidence="1">4.3.3.6</ecNumber>
    </recommendedName>
    <alternativeName>
        <fullName evidence="1">Pdx1</fullName>
    </alternativeName>
</protein>
<organism>
    <name type="scientific">Pyrobaculum aerophilum (strain ATCC 51768 / DSM 7523 / JCM 9630 / CIP 104966 / NBRC 100827 / IM2)</name>
    <dbReference type="NCBI Taxonomy" id="178306"/>
    <lineage>
        <taxon>Archaea</taxon>
        <taxon>Thermoproteota</taxon>
        <taxon>Thermoprotei</taxon>
        <taxon>Thermoproteales</taxon>
        <taxon>Thermoproteaceae</taxon>
        <taxon>Pyrobaculum</taxon>
    </lineage>
</organism>
<keyword id="KW-0456">Lyase</keyword>
<keyword id="KW-0663">Pyridoxal phosphate</keyword>
<keyword id="KW-1185">Reference proteome</keyword>
<keyword id="KW-0704">Schiff base</keyword>
<proteinExistence type="inferred from homology"/>
<dbReference type="EC" id="4.3.3.6" evidence="1"/>
<dbReference type="EMBL" id="AE009441">
    <property type="protein sequence ID" value="AAL64457.1"/>
    <property type="molecule type" value="Genomic_DNA"/>
</dbReference>
<dbReference type="RefSeq" id="WP_011008925.1">
    <property type="nucleotide sequence ID" value="NC_003364.1"/>
</dbReference>
<dbReference type="SMR" id="Q8ZUF0"/>
<dbReference type="FunCoup" id="Q8ZUF0">
    <property type="interactions" value="154"/>
</dbReference>
<dbReference type="STRING" id="178306.PAE2819"/>
<dbReference type="EnsemblBacteria" id="AAL64457">
    <property type="protein sequence ID" value="AAL64457"/>
    <property type="gene ID" value="PAE2819"/>
</dbReference>
<dbReference type="GeneID" id="1463619"/>
<dbReference type="KEGG" id="pai:PAE2819"/>
<dbReference type="PATRIC" id="fig|178306.9.peg.2101"/>
<dbReference type="eggNOG" id="arCOG04075">
    <property type="taxonomic scope" value="Archaea"/>
</dbReference>
<dbReference type="HOGENOM" id="CLU_055352_1_0_2"/>
<dbReference type="InParanoid" id="Q8ZUF0"/>
<dbReference type="UniPathway" id="UPA00245"/>
<dbReference type="Proteomes" id="UP000002439">
    <property type="component" value="Chromosome"/>
</dbReference>
<dbReference type="GO" id="GO:0016843">
    <property type="term" value="F:amine-lyase activity"/>
    <property type="evidence" value="ECO:0000318"/>
    <property type="project" value="GO_Central"/>
</dbReference>
<dbReference type="GO" id="GO:0036381">
    <property type="term" value="F:pyridoxal 5'-phosphate synthase (glutamine hydrolysing) activity"/>
    <property type="evidence" value="ECO:0007669"/>
    <property type="project" value="UniProtKB-UniRule"/>
</dbReference>
<dbReference type="GO" id="GO:0006520">
    <property type="term" value="P:amino acid metabolic process"/>
    <property type="evidence" value="ECO:0000318"/>
    <property type="project" value="GO_Central"/>
</dbReference>
<dbReference type="GO" id="GO:0042823">
    <property type="term" value="P:pyridoxal phosphate biosynthetic process"/>
    <property type="evidence" value="ECO:0000318"/>
    <property type="project" value="GO_Central"/>
</dbReference>
<dbReference type="GO" id="GO:0008615">
    <property type="term" value="P:pyridoxine biosynthetic process"/>
    <property type="evidence" value="ECO:0000318"/>
    <property type="project" value="GO_Central"/>
</dbReference>
<dbReference type="CDD" id="cd04727">
    <property type="entry name" value="pdxS"/>
    <property type="match status" value="1"/>
</dbReference>
<dbReference type="FunFam" id="3.20.20.70:FF:000001">
    <property type="entry name" value="Pyridoxine biosynthesis protein PDX1"/>
    <property type="match status" value="1"/>
</dbReference>
<dbReference type="Gene3D" id="3.20.20.70">
    <property type="entry name" value="Aldolase class I"/>
    <property type="match status" value="1"/>
</dbReference>
<dbReference type="HAMAP" id="MF_01824">
    <property type="entry name" value="PdxS"/>
    <property type="match status" value="1"/>
</dbReference>
<dbReference type="InterPro" id="IPR013785">
    <property type="entry name" value="Aldolase_TIM"/>
</dbReference>
<dbReference type="InterPro" id="IPR001852">
    <property type="entry name" value="PdxS/SNZ"/>
</dbReference>
<dbReference type="InterPro" id="IPR033755">
    <property type="entry name" value="PdxS/SNZ_N"/>
</dbReference>
<dbReference type="InterPro" id="IPR011060">
    <property type="entry name" value="RibuloseP-bd_barrel"/>
</dbReference>
<dbReference type="NCBIfam" id="NF003215">
    <property type="entry name" value="PRK04180.1"/>
    <property type="match status" value="1"/>
</dbReference>
<dbReference type="PANTHER" id="PTHR31829">
    <property type="entry name" value="PYRIDOXAL 5'-PHOSPHATE SYNTHASE SUBUNIT SNZ1-RELATED"/>
    <property type="match status" value="1"/>
</dbReference>
<dbReference type="PANTHER" id="PTHR31829:SF0">
    <property type="entry name" value="PYRIDOXAL 5'-PHOSPHATE SYNTHASE SUBUNIT SNZ1-RELATED"/>
    <property type="match status" value="1"/>
</dbReference>
<dbReference type="Pfam" id="PF01680">
    <property type="entry name" value="SOR_SNZ"/>
    <property type="match status" value="1"/>
</dbReference>
<dbReference type="PIRSF" id="PIRSF029271">
    <property type="entry name" value="Pdx1"/>
    <property type="match status" value="1"/>
</dbReference>
<dbReference type="SUPFAM" id="SSF51366">
    <property type="entry name" value="Ribulose-phoshate binding barrel"/>
    <property type="match status" value="1"/>
</dbReference>
<dbReference type="PROSITE" id="PS01235">
    <property type="entry name" value="PDXS_SNZ_1"/>
    <property type="match status" value="1"/>
</dbReference>
<dbReference type="PROSITE" id="PS51129">
    <property type="entry name" value="PDXS_SNZ_2"/>
    <property type="match status" value="1"/>
</dbReference>